<organism>
    <name type="scientific">Francisella tularensis subsp. holarctica (strain FTNF002-00 / FTA)</name>
    <dbReference type="NCBI Taxonomy" id="458234"/>
    <lineage>
        <taxon>Bacteria</taxon>
        <taxon>Pseudomonadati</taxon>
        <taxon>Pseudomonadota</taxon>
        <taxon>Gammaproteobacteria</taxon>
        <taxon>Thiotrichales</taxon>
        <taxon>Francisellaceae</taxon>
        <taxon>Francisella</taxon>
    </lineage>
</organism>
<feature type="chain" id="PRO_1000049505" description="Glycerol-3-phosphate dehydrogenase [NAD(P)+]">
    <location>
        <begin position="1"/>
        <end position="332"/>
    </location>
</feature>
<feature type="active site" description="Proton acceptor" evidence="1">
    <location>
        <position position="191"/>
    </location>
</feature>
<feature type="binding site" evidence="1">
    <location>
        <position position="13"/>
    </location>
    <ligand>
        <name>NADPH</name>
        <dbReference type="ChEBI" id="CHEBI:57783"/>
    </ligand>
</feature>
<feature type="binding site" evidence="1">
    <location>
        <position position="34"/>
    </location>
    <ligand>
        <name>NADPH</name>
        <dbReference type="ChEBI" id="CHEBI:57783"/>
    </ligand>
</feature>
<feature type="binding site" evidence="1">
    <location>
        <position position="108"/>
    </location>
    <ligand>
        <name>NADPH</name>
        <dbReference type="ChEBI" id="CHEBI:57783"/>
    </ligand>
</feature>
<feature type="binding site" evidence="1">
    <location>
        <position position="108"/>
    </location>
    <ligand>
        <name>sn-glycerol 3-phosphate</name>
        <dbReference type="ChEBI" id="CHEBI:57597"/>
    </ligand>
</feature>
<feature type="binding site" evidence="1">
    <location>
        <position position="136"/>
    </location>
    <ligand>
        <name>sn-glycerol 3-phosphate</name>
        <dbReference type="ChEBI" id="CHEBI:57597"/>
    </ligand>
</feature>
<feature type="binding site" evidence="1">
    <location>
        <position position="138"/>
    </location>
    <ligand>
        <name>sn-glycerol 3-phosphate</name>
        <dbReference type="ChEBI" id="CHEBI:57597"/>
    </ligand>
</feature>
<feature type="binding site" evidence="1">
    <location>
        <position position="140"/>
    </location>
    <ligand>
        <name>NADPH</name>
        <dbReference type="ChEBI" id="CHEBI:57783"/>
    </ligand>
</feature>
<feature type="binding site" evidence="1">
    <location>
        <position position="191"/>
    </location>
    <ligand>
        <name>sn-glycerol 3-phosphate</name>
        <dbReference type="ChEBI" id="CHEBI:57597"/>
    </ligand>
</feature>
<feature type="binding site" evidence="1">
    <location>
        <position position="244"/>
    </location>
    <ligand>
        <name>sn-glycerol 3-phosphate</name>
        <dbReference type="ChEBI" id="CHEBI:57597"/>
    </ligand>
</feature>
<feature type="binding site" evidence="1">
    <location>
        <position position="254"/>
    </location>
    <ligand>
        <name>sn-glycerol 3-phosphate</name>
        <dbReference type="ChEBI" id="CHEBI:57597"/>
    </ligand>
</feature>
<feature type="binding site" evidence="1">
    <location>
        <position position="255"/>
    </location>
    <ligand>
        <name>NADPH</name>
        <dbReference type="ChEBI" id="CHEBI:57783"/>
    </ligand>
</feature>
<feature type="binding site" evidence="1">
    <location>
        <position position="255"/>
    </location>
    <ligand>
        <name>sn-glycerol 3-phosphate</name>
        <dbReference type="ChEBI" id="CHEBI:57597"/>
    </ligand>
</feature>
<feature type="binding site" evidence="1">
    <location>
        <position position="256"/>
    </location>
    <ligand>
        <name>sn-glycerol 3-phosphate</name>
        <dbReference type="ChEBI" id="CHEBI:57597"/>
    </ligand>
</feature>
<feature type="binding site" evidence="1">
    <location>
        <position position="279"/>
    </location>
    <ligand>
        <name>NADPH</name>
        <dbReference type="ChEBI" id="CHEBI:57783"/>
    </ligand>
</feature>
<feature type="binding site" evidence="1">
    <location>
        <position position="281"/>
    </location>
    <ligand>
        <name>NADPH</name>
        <dbReference type="ChEBI" id="CHEBI:57783"/>
    </ligand>
</feature>
<accession>A7NA69</accession>
<reference key="1">
    <citation type="journal article" date="2009" name="PLoS ONE">
        <title>Complete genome sequence of Francisella tularensis subspecies holarctica FTNF002-00.</title>
        <authorList>
            <person name="Barabote R.D."/>
            <person name="Xie G."/>
            <person name="Brettin T.S."/>
            <person name="Hinrichs S.H."/>
            <person name="Fey P.D."/>
            <person name="Jay J.J."/>
            <person name="Engle J.L."/>
            <person name="Godbole S.D."/>
            <person name="Noronha J.M."/>
            <person name="Scheuermann R.H."/>
            <person name="Zhou L.W."/>
            <person name="Lion C."/>
            <person name="Dempsey M.P."/>
        </authorList>
    </citation>
    <scope>NUCLEOTIDE SEQUENCE [LARGE SCALE GENOMIC DNA]</scope>
    <source>
        <strain>FTNF002-00 / FTA</strain>
    </source>
</reference>
<proteinExistence type="inferred from homology"/>
<gene>
    <name evidence="1" type="primary">gpsA</name>
    <name type="ordered locus">FTA_0395</name>
</gene>
<comment type="function">
    <text evidence="1">Catalyzes the reduction of the glycolytic intermediate dihydroxyacetone phosphate (DHAP) to sn-glycerol 3-phosphate (G3P), the key precursor for phospholipid synthesis.</text>
</comment>
<comment type="catalytic activity">
    <reaction evidence="1">
        <text>sn-glycerol 3-phosphate + NAD(+) = dihydroxyacetone phosphate + NADH + H(+)</text>
        <dbReference type="Rhea" id="RHEA:11092"/>
        <dbReference type="ChEBI" id="CHEBI:15378"/>
        <dbReference type="ChEBI" id="CHEBI:57540"/>
        <dbReference type="ChEBI" id="CHEBI:57597"/>
        <dbReference type="ChEBI" id="CHEBI:57642"/>
        <dbReference type="ChEBI" id="CHEBI:57945"/>
        <dbReference type="EC" id="1.1.1.94"/>
    </reaction>
    <physiologicalReaction direction="right-to-left" evidence="1">
        <dbReference type="Rhea" id="RHEA:11094"/>
    </physiologicalReaction>
</comment>
<comment type="catalytic activity">
    <reaction evidence="1">
        <text>sn-glycerol 3-phosphate + NADP(+) = dihydroxyacetone phosphate + NADPH + H(+)</text>
        <dbReference type="Rhea" id="RHEA:11096"/>
        <dbReference type="ChEBI" id="CHEBI:15378"/>
        <dbReference type="ChEBI" id="CHEBI:57597"/>
        <dbReference type="ChEBI" id="CHEBI:57642"/>
        <dbReference type="ChEBI" id="CHEBI:57783"/>
        <dbReference type="ChEBI" id="CHEBI:58349"/>
        <dbReference type="EC" id="1.1.1.94"/>
    </reaction>
    <physiologicalReaction direction="right-to-left" evidence="1">
        <dbReference type="Rhea" id="RHEA:11098"/>
    </physiologicalReaction>
</comment>
<comment type="pathway">
    <text evidence="1">Membrane lipid metabolism; glycerophospholipid metabolism.</text>
</comment>
<comment type="subcellular location">
    <subcellularLocation>
        <location evidence="1">Cytoplasm</location>
    </subcellularLocation>
</comment>
<comment type="similarity">
    <text evidence="1">Belongs to the NAD-dependent glycerol-3-phosphate dehydrogenase family.</text>
</comment>
<keyword id="KW-0963">Cytoplasm</keyword>
<keyword id="KW-0444">Lipid biosynthesis</keyword>
<keyword id="KW-0443">Lipid metabolism</keyword>
<keyword id="KW-0520">NAD</keyword>
<keyword id="KW-0521">NADP</keyword>
<keyword id="KW-0547">Nucleotide-binding</keyword>
<keyword id="KW-0560">Oxidoreductase</keyword>
<keyword id="KW-0594">Phospholipid biosynthesis</keyword>
<keyword id="KW-1208">Phospholipid metabolism</keyword>
<protein>
    <recommendedName>
        <fullName evidence="1">Glycerol-3-phosphate dehydrogenase [NAD(P)+]</fullName>
        <ecNumber evidence="1">1.1.1.94</ecNumber>
    </recommendedName>
    <alternativeName>
        <fullName evidence="1">NAD(P)(+)-dependent glycerol-3-phosphate dehydrogenase</fullName>
    </alternativeName>
    <alternativeName>
        <fullName evidence="1">NAD(P)H-dependent dihydroxyacetone-phosphate reductase</fullName>
    </alternativeName>
</protein>
<sequence>MQKNILVLGAGAWGTALALQLAYRGHNVRINSWKAEHNEQMLKDNNNHKYLPSIEKFPSRLKAIQDWQANIIEFDSILVATPSSGFKNTILELKECILPQQNIISATKGFCHDSYALLSEIAEDILPTTKFALLTGPSFAKELANQLPTAVVVASKDINYARYVQELFSNENFRCYTTTDIIGAQVGGAVKNVLAITAGIAAGMEFGVNAHAALITRGLAEIKKLGLKLGANSETFIGLSCLGDLLLTCSDNQSRNRRFGLYLGQGMTIQQALKEVNNVVEGYFTAKAVYNFAKKHNVEMPLVFATYRILYEAADPRDIVKELMTRQLKNEN</sequence>
<dbReference type="EC" id="1.1.1.94" evidence="1"/>
<dbReference type="EMBL" id="CP000803">
    <property type="protein sequence ID" value="ABU60872.1"/>
    <property type="molecule type" value="Genomic_DNA"/>
</dbReference>
<dbReference type="RefSeq" id="WP_003014572.1">
    <property type="nucleotide sequence ID" value="NC_009749.1"/>
</dbReference>
<dbReference type="SMR" id="A7NA69"/>
<dbReference type="KEGG" id="fta:FTA_0395"/>
<dbReference type="HOGENOM" id="CLU_033449_0_2_6"/>
<dbReference type="UniPathway" id="UPA00940"/>
<dbReference type="GO" id="GO:0005829">
    <property type="term" value="C:cytosol"/>
    <property type="evidence" value="ECO:0007669"/>
    <property type="project" value="TreeGrafter"/>
</dbReference>
<dbReference type="GO" id="GO:0047952">
    <property type="term" value="F:glycerol-3-phosphate dehydrogenase [NAD(P)+] activity"/>
    <property type="evidence" value="ECO:0007669"/>
    <property type="project" value="UniProtKB-UniRule"/>
</dbReference>
<dbReference type="GO" id="GO:0051287">
    <property type="term" value="F:NAD binding"/>
    <property type="evidence" value="ECO:0007669"/>
    <property type="project" value="InterPro"/>
</dbReference>
<dbReference type="GO" id="GO:0005975">
    <property type="term" value="P:carbohydrate metabolic process"/>
    <property type="evidence" value="ECO:0007669"/>
    <property type="project" value="InterPro"/>
</dbReference>
<dbReference type="GO" id="GO:0046167">
    <property type="term" value="P:glycerol-3-phosphate biosynthetic process"/>
    <property type="evidence" value="ECO:0007669"/>
    <property type="project" value="UniProtKB-UniRule"/>
</dbReference>
<dbReference type="GO" id="GO:0046168">
    <property type="term" value="P:glycerol-3-phosphate catabolic process"/>
    <property type="evidence" value="ECO:0007669"/>
    <property type="project" value="InterPro"/>
</dbReference>
<dbReference type="GO" id="GO:0046474">
    <property type="term" value="P:glycerophospholipid biosynthetic process"/>
    <property type="evidence" value="ECO:0007669"/>
    <property type="project" value="TreeGrafter"/>
</dbReference>
<dbReference type="FunFam" id="1.10.1040.10:FF:000001">
    <property type="entry name" value="Glycerol-3-phosphate dehydrogenase [NAD(P)+]"/>
    <property type="match status" value="1"/>
</dbReference>
<dbReference type="FunFam" id="3.40.50.720:FF:000019">
    <property type="entry name" value="Glycerol-3-phosphate dehydrogenase [NAD(P)+]"/>
    <property type="match status" value="1"/>
</dbReference>
<dbReference type="Gene3D" id="1.10.1040.10">
    <property type="entry name" value="N-(1-d-carboxylethyl)-l-norvaline Dehydrogenase, domain 2"/>
    <property type="match status" value="1"/>
</dbReference>
<dbReference type="Gene3D" id="3.40.50.720">
    <property type="entry name" value="NAD(P)-binding Rossmann-like Domain"/>
    <property type="match status" value="1"/>
</dbReference>
<dbReference type="HAMAP" id="MF_00394">
    <property type="entry name" value="NAD_Glyc3P_dehydrog"/>
    <property type="match status" value="1"/>
</dbReference>
<dbReference type="InterPro" id="IPR008927">
    <property type="entry name" value="6-PGluconate_DH-like_C_sf"/>
</dbReference>
<dbReference type="InterPro" id="IPR013328">
    <property type="entry name" value="6PGD_dom2"/>
</dbReference>
<dbReference type="InterPro" id="IPR006168">
    <property type="entry name" value="G3P_DH_NAD-dep"/>
</dbReference>
<dbReference type="InterPro" id="IPR006109">
    <property type="entry name" value="G3P_DH_NAD-dep_C"/>
</dbReference>
<dbReference type="InterPro" id="IPR011128">
    <property type="entry name" value="G3P_DH_NAD-dep_N"/>
</dbReference>
<dbReference type="InterPro" id="IPR036291">
    <property type="entry name" value="NAD(P)-bd_dom_sf"/>
</dbReference>
<dbReference type="NCBIfam" id="NF000940">
    <property type="entry name" value="PRK00094.1-2"/>
    <property type="match status" value="1"/>
</dbReference>
<dbReference type="NCBIfam" id="NF000942">
    <property type="entry name" value="PRK00094.1-4"/>
    <property type="match status" value="1"/>
</dbReference>
<dbReference type="PANTHER" id="PTHR11728">
    <property type="entry name" value="GLYCEROL-3-PHOSPHATE DEHYDROGENASE"/>
    <property type="match status" value="1"/>
</dbReference>
<dbReference type="PANTHER" id="PTHR11728:SF1">
    <property type="entry name" value="GLYCEROL-3-PHOSPHATE DEHYDROGENASE [NAD(+)] 2, CHLOROPLASTIC"/>
    <property type="match status" value="1"/>
</dbReference>
<dbReference type="Pfam" id="PF07479">
    <property type="entry name" value="NAD_Gly3P_dh_C"/>
    <property type="match status" value="1"/>
</dbReference>
<dbReference type="Pfam" id="PF01210">
    <property type="entry name" value="NAD_Gly3P_dh_N"/>
    <property type="match status" value="1"/>
</dbReference>
<dbReference type="PIRSF" id="PIRSF000114">
    <property type="entry name" value="Glycerol-3-P_dh"/>
    <property type="match status" value="1"/>
</dbReference>
<dbReference type="PRINTS" id="PR00077">
    <property type="entry name" value="GPDHDRGNASE"/>
</dbReference>
<dbReference type="SUPFAM" id="SSF48179">
    <property type="entry name" value="6-phosphogluconate dehydrogenase C-terminal domain-like"/>
    <property type="match status" value="1"/>
</dbReference>
<dbReference type="SUPFAM" id="SSF51735">
    <property type="entry name" value="NAD(P)-binding Rossmann-fold domains"/>
    <property type="match status" value="1"/>
</dbReference>
<dbReference type="PROSITE" id="PS00957">
    <property type="entry name" value="NAD_G3PDH"/>
    <property type="match status" value="1"/>
</dbReference>
<name>GPDA_FRATF</name>
<evidence type="ECO:0000255" key="1">
    <source>
        <dbReference type="HAMAP-Rule" id="MF_00394"/>
    </source>
</evidence>